<proteinExistence type="inferred from homology"/>
<reference key="1">
    <citation type="journal article" date="1999" name="Nature">
        <title>Evidence for lateral gene transfer between Archaea and Bacteria from genome sequence of Thermotoga maritima.</title>
        <authorList>
            <person name="Nelson K.E."/>
            <person name="Clayton R.A."/>
            <person name="Gill S.R."/>
            <person name="Gwinn M.L."/>
            <person name="Dodson R.J."/>
            <person name="Haft D.H."/>
            <person name="Hickey E.K."/>
            <person name="Peterson J.D."/>
            <person name="Nelson W.C."/>
            <person name="Ketchum K.A."/>
            <person name="McDonald L.A."/>
            <person name="Utterback T.R."/>
            <person name="Malek J.A."/>
            <person name="Linher K.D."/>
            <person name="Garrett M.M."/>
            <person name="Stewart A.M."/>
            <person name="Cotton M.D."/>
            <person name="Pratt M.S."/>
            <person name="Phillips C.A."/>
            <person name="Richardson D.L."/>
            <person name="Heidelberg J.F."/>
            <person name="Sutton G.G."/>
            <person name="Fleischmann R.D."/>
            <person name="Eisen J.A."/>
            <person name="White O."/>
            <person name="Salzberg S.L."/>
            <person name="Smith H.O."/>
            <person name="Venter J.C."/>
            <person name="Fraser C.M."/>
        </authorList>
    </citation>
    <scope>NUCLEOTIDE SEQUENCE [LARGE SCALE GENOMIC DNA]</scope>
    <source>
        <strain>ATCC 43589 / DSM 3109 / JCM 10099 / NBRC 100826 / MSB8</strain>
    </source>
</reference>
<sequence length="282" mass="30769">MDQRNKTLRDLPWEGERLSFFHDLVEYSFLRTAFVGGILVASLSGLVSPIVVFRRMEFIGDGTAHAVFAGLAAATLIGADHRLIAFATALLFAFAVSLFSRSRISESSAIGILLPFFMAVGVVLFSVSGRYQTDVMGYLFGDVLLVNSTDVAITAVVLALSVILTVVFRWDIKYFIVDEKMARFYGIKTDLIRFLITSFIAITVVTTVKVVGVILTGALLILPGLVSKIFGKSFWSLTTISVIFSTGVFFAGFLTAYTLDLPPGPVIVIIAFVSFLPMLKFS</sequence>
<comment type="function">
    <text>Part of an ATP-driven transport system TM_0123/TM_0124/TM_0125 for a metal.</text>
</comment>
<comment type="subcellular location">
    <subcellularLocation>
        <location evidence="2">Cell inner membrane</location>
        <topology evidence="2">Multi-pass membrane protein</topology>
    </subcellularLocation>
</comment>
<comment type="similarity">
    <text evidence="2">Belongs to the ABC-3 integral membrane protein family.</text>
</comment>
<keyword id="KW-0997">Cell inner membrane</keyword>
<keyword id="KW-1003">Cell membrane</keyword>
<keyword id="KW-0472">Membrane</keyword>
<keyword id="KW-1185">Reference proteome</keyword>
<keyword id="KW-0812">Transmembrane</keyword>
<keyword id="KW-1133">Transmembrane helix</keyword>
<keyword id="KW-0813">Transport</keyword>
<gene>
    <name type="ordered locus">TM_0125</name>
</gene>
<evidence type="ECO:0000255" key="1"/>
<evidence type="ECO:0000305" key="2"/>
<name>Y125_THEMA</name>
<feature type="chain" id="PRO_0000171174" description="Probable metal transport system membrane protein TM_0125">
    <location>
        <begin position="1"/>
        <end position="282"/>
    </location>
</feature>
<feature type="transmembrane region" description="Helical" evidence="1">
    <location>
        <begin position="33"/>
        <end position="53"/>
    </location>
</feature>
<feature type="transmembrane region" description="Helical" evidence="1">
    <location>
        <begin position="58"/>
        <end position="78"/>
    </location>
</feature>
<feature type="transmembrane region" description="Helical" evidence="1">
    <location>
        <begin position="79"/>
        <end position="99"/>
    </location>
</feature>
<feature type="transmembrane region" description="Helical" evidence="1">
    <location>
        <begin position="109"/>
        <end position="129"/>
    </location>
</feature>
<feature type="transmembrane region" description="Helical" evidence="1">
    <location>
        <begin position="148"/>
        <end position="168"/>
    </location>
</feature>
<feature type="transmembrane region" description="Helical" evidence="1">
    <location>
        <begin position="184"/>
        <end position="204"/>
    </location>
</feature>
<feature type="transmembrane region" description="Helical" evidence="1">
    <location>
        <begin position="210"/>
        <end position="230"/>
    </location>
</feature>
<feature type="transmembrane region" description="Helical" evidence="1">
    <location>
        <begin position="234"/>
        <end position="254"/>
    </location>
</feature>
<feature type="transmembrane region" description="Helical" evidence="1">
    <location>
        <begin position="259"/>
        <end position="279"/>
    </location>
</feature>
<protein>
    <recommendedName>
        <fullName>Probable metal transport system membrane protein TM_0125</fullName>
    </recommendedName>
</protein>
<dbReference type="EMBL" id="AE000512">
    <property type="protein sequence ID" value="AAD35219.1"/>
    <property type="molecule type" value="Genomic_DNA"/>
</dbReference>
<dbReference type="PIR" id="E72415">
    <property type="entry name" value="E72415"/>
</dbReference>
<dbReference type="RefSeq" id="NP_227941.1">
    <property type="nucleotide sequence ID" value="NC_000853.1"/>
</dbReference>
<dbReference type="SMR" id="Q9WXX9"/>
<dbReference type="FunCoup" id="Q9WXX9">
    <property type="interactions" value="115"/>
</dbReference>
<dbReference type="STRING" id="243274.TM_0125"/>
<dbReference type="PaxDb" id="243274-THEMA_04180"/>
<dbReference type="EnsemblBacteria" id="AAD35219">
    <property type="protein sequence ID" value="AAD35219"/>
    <property type="gene ID" value="TM_0125"/>
</dbReference>
<dbReference type="KEGG" id="tma:TM0125"/>
<dbReference type="PATRIC" id="fig|243274.5.peg.123"/>
<dbReference type="eggNOG" id="COG1108">
    <property type="taxonomic scope" value="Bacteria"/>
</dbReference>
<dbReference type="InParanoid" id="Q9WXX9"/>
<dbReference type="OrthoDB" id="9798540at2"/>
<dbReference type="Proteomes" id="UP000008183">
    <property type="component" value="Chromosome"/>
</dbReference>
<dbReference type="GO" id="GO:0043190">
    <property type="term" value="C:ATP-binding cassette (ABC) transporter complex"/>
    <property type="evidence" value="ECO:0007669"/>
    <property type="project" value="InterPro"/>
</dbReference>
<dbReference type="GO" id="GO:0005886">
    <property type="term" value="C:plasma membrane"/>
    <property type="evidence" value="ECO:0000318"/>
    <property type="project" value="GO_Central"/>
</dbReference>
<dbReference type="GO" id="GO:0010043">
    <property type="term" value="P:response to zinc ion"/>
    <property type="evidence" value="ECO:0000318"/>
    <property type="project" value="GO_Central"/>
</dbReference>
<dbReference type="GO" id="GO:0055085">
    <property type="term" value="P:transmembrane transport"/>
    <property type="evidence" value="ECO:0007669"/>
    <property type="project" value="InterPro"/>
</dbReference>
<dbReference type="CDD" id="cd06550">
    <property type="entry name" value="TM_ABC_iron-siderophores_like"/>
    <property type="match status" value="1"/>
</dbReference>
<dbReference type="Gene3D" id="1.10.3470.10">
    <property type="entry name" value="ABC transporter involved in vitamin B12 uptake, BtuC"/>
    <property type="match status" value="1"/>
</dbReference>
<dbReference type="InterPro" id="IPR037294">
    <property type="entry name" value="ABC_BtuC-like"/>
</dbReference>
<dbReference type="InterPro" id="IPR001626">
    <property type="entry name" value="ABC_TroCD"/>
</dbReference>
<dbReference type="PANTHER" id="PTHR30477">
    <property type="entry name" value="ABC-TRANSPORTER METAL-BINDING PROTEIN"/>
    <property type="match status" value="1"/>
</dbReference>
<dbReference type="PANTHER" id="PTHR30477:SF0">
    <property type="entry name" value="METAL TRANSPORT SYSTEM MEMBRANE PROTEIN TM_0125-RELATED"/>
    <property type="match status" value="1"/>
</dbReference>
<dbReference type="Pfam" id="PF00950">
    <property type="entry name" value="ABC-3"/>
    <property type="match status" value="1"/>
</dbReference>
<dbReference type="SUPFAM" id="SSF81345">
    <property type="entry name" value="ABC transporter involved in vitamin B12 uptake, BtuC"/>
    <property type="match status" value="1"/>
</dbReference>
<organism>
    <name type="scientific">Thermotoga maritima (strain ATCC 43589 / DSM 3109 / JCM 10099 / NBRC 100826 / MSB8)</name>
    <dbReference type="NCBI Taxonomy" id="243274"/>
    <lineage>
        <taxon>Bacteria</taxon>
        <taxon>Thermotogati</taxon>
        <taxon>Thermotogota</taxon>
        <taxon>Thermotogae</taxon>
        <taxon>Thermotogales</taxon>
        <taxon>Thermotogaceae</taxon>
        <taxon>Thermotoga</taxon>
    </lineage>
</organism>
<accession>Q9WXX9</accession>